<gene>
    <name evidence="1" type="primary">ribL</name>
    <name type="ordered locus">Hmuk_1909</name>
</gene>
<protein>
    <recommendedName>
        <fullName evidence="1">FAD synthase</fullName>
        <ecNumber evidence="1">2.7.7.2</ecNumber>
    </recommendedName>
    <alternativeName>
        <fullName evidence="1">FMN adenylyltransferase</fullName>
    </alternativeName>
    <alternativeName>
        <fullName evidence="1">Flavin adenine dinucleotide synthase</fullName>
    </alternativeName>
</protein>
<reference key="1">
    <citation type="journal article" date="2009" name="Stand. Genomic Sci.">
        <title>Complete genome sequence of Halomicrobium mukohataei type strain (arg-2).</title>
        <authorList>
            <person name="Tindall B.J."/>
            <person name="Schneider S."/>
            <person name="Lapidus A."/>
            <person name="Copeland A."/>
            <person name="Glavina Del Rio T."/>
            <person name="Nolan M."/>
            <person name="Lucas S."/>
            <person name="Chen F."/>
            <person name="Tice H."/>
            <person name="Cheng J.F."/>
            <person name="Saunders E."/>
            <person name="Bruce D."/>
            <person name="Goodwin L."/>
            <person name="Pitluck S."/>
            <person name="Mikhailova N."/>
            <person name="Pati A."/>
            <person name="Ivanova N."/>
            <person name="Mavrommatis K."/>
            <person name="Chen A."/>
            <person name="Palaniappan K."/>
            <person name="Chain P."/>
            <person name="Land M."/>
            <person name="Hauser L."/>
            <person name="Chang Y.J."/>
            <person name="Jeffries C.D."/>
            <person name="Brettin T."/>
            <person name="Han C."/>
            <person name="Rohde M."/>
            <person name="Goker M."/>
            <person name="Bristow J."/>
            <person name="Eisen J.A."/>
            <person name="Markowitz V."/>
            <person name="Hugenholtz P."/>
            <person name="Klenk H.P."/>
            <person name="Kyrpides N.C."/>
            <person name="Detter J.C."/>
        </authorList>
    </citation>
    <scope>NUCLEOTIDE SEQUENCE [LARGE SCALE GENOMIC DNA]</scope>
    <source>
        <strain>ATCC 700874 / DSM 12286 / JCM 9738 / NCIMB 13541</strain>
    </source>
</reference>
<proteinExistence type="inferred from homology"/>
<accession>C7P4K0</accession>
<sequence>MVTRDVVAQGTFDILHPGHVHYLREAKAMGDRLHVIVARSENVTHKAPPVVPDRQRVEMVEALDPVDYARLGHAEDIFVPIEQIEPDVIALGYDQHHEVEGIETALDERGLDCEVRRAGPRKASEDEILSTGSIIEKILDERS</sequence>
<comment type="function">
    <text evidence="1">Catalyzes the transfer of the AMP portion of ATP to flavin mononucleotide (FMN) to produce flavin adenine dinucleotide (FAD) coenzyme.</text>
</comment>
<comment type="catalytic activity">
    <reaction evidence="1">
        <text>FMN + ATP + H(+) = FAD + diphosphate</text>
        <dbReference type="Rhea" id="RHEA:17237"/>
        <dbReference type="ChEBI" id="CHEBI:15378"/>
        <dbReference type="ChEBI" id="CHEBI:30616"/>
        <dbReference type="ChEBI" id="CHEBI:33019"/>
        <dbReference type="ChEBI" id="CHEBI:57692"/>
        <dbReference type="ChEBI" id="CHEBI:58210"/>
        <dbReference type="EC" id="2.7.7.2"/>
    </reaction>
</comment>
<comment type="cofactor">
    <cofactor evidence="1">
        <name>a divalent metal cation</name>
        <dbReference type="ChEBI" id="CHEBI:60240"/>
    </cofactor>
</comment>
<comment type="pathway">
    <text evidence="1">Cofactor biosynthesis; FAD biosynthesis; FAD from FMN: step 1/1.</text>
</comment>
<comment type="subunit">
    <text evidence="1">Homodimer.</text>
</comment>
<comment type="similarity">
    <text evidence="1">Belongs to the archaeal FAD synthase family.</text>
</comment>
<evidence type="ECO:0000255" key="1">
    <source>
        <dbReference type="HAMAP-Rule" id="MF_02115"/>
    </source>
</evidence>
<dbReference type="EC" id="2.7.7.2" evidence="1"/>
<dbReference type="EMBL" id="CP001688">
    <property type="protein sequence ID" value="ACV48022.1"/>
    <property type="molecule type" value="Genomic_DNA"/>
</dbReference>
<dbReference type="RefSeq" id="WP_015762864.1">
    <property type="nucleotide sequence ID" value="NC_013202.1"/>
</dbReference>
<dbReference type="SMR" id="C7P4K0"/>
<dbReference type="STRING" id="485914.Hmuk_1909"/>
<dbReference type="GeneID" id="42179806"/>
<dbReference type="GeneID" id="8411436"/>
<dbReference type="KEGG" id="hmu:Hmuk_1909"/>
<dbReference type="eggNOG" id="arCOG01222">
    <property type="taxonomic scope" value="Archaea"/>
</dbReference>
<dbReference type="HOGENOM" id="CLU_034585_2_1_2"/>
<dbReference type="UniPathway" id="UPA00277">
    <property type="reaction ID" value="UER00407"/>
</dbReference>
<dbReference type="Proteomes" id="UP000001746">
    <property type="component" value="Chromosome"/>
</dbReference>
<dbReference type="GO" id="GO:0005524">
    <property type="term" value="F:ATP binding"/>
    <property type="evidence" value="ECO:0007669"/>
    <property type="project" value="UniProtKB-UniRule"/>
</dbReference>
<dbReference type="GO" id="GO:0003919">
    <property type="term" value="F:FMN adenylyltransferase activity"/>
    <property type="evidence" value="ECO:0007669"/>
    <property type="project" value="UniProtKB-UniRule"/>
</dbReference>
<dbReference type="GO" id="GO:0006747">
    <property type="term" value="P:FAD biosynthetic process"/>
    <property type="evidence" value="ECO:0007669"/>
    <property type="project" value="UniProtKB-UniRule"/>
</dbReference>
<dbReference type="GO" id="GO:0046444">
    <property type="term" value="P:FMN metabolic process"/>
    <property type="evidence" value="ECO:0007669"/>
    <property type="project" value="UniProtKB-UniRule"/>
</dbReference>
<dbReference type="Gene3D" id="3.40.50.620">
    <property type="entry name" value="HUPs"/>
    <property type="match status" value="1"/>
</dbReference>
<dbReference type="HAMAP" id="MF_02115">
    <property type="entry name" value="FAD_synth_arch"/>
    <property type="match status" value="1"/>
</dbReference>
<dbReference type="InterPro" id="IPR050385">
    <property type="entry name" value="Archaeal_FAD_synthase"/>
</dbReference>
<dbReference type="InterPro" id="IPR004821">
    <property type="entry name" value="Cyt_trans-like"/>
</dbReference>
<dbReference type="InterPro" id="IPR024902">
    <property type="entry name" value="FAD_synth_RibL"/>
</dbReference>
<dbReference type="InterPro" id="IPR014729">
    <property type="entry name" value="Rossmann-like_a/b/a_fold"/>
</dbReference>
<dbReference type="NCBIfam" id="TIGR00125">
    <property type="entry name" value="cyt_tran_rel"/>
    <property type="match status" value="1"/>
</dbReference>
<dbReference type="PANTHER" id="PTHR43793">
    <property type="entry name" value="FAD SYNTHASE"/>
    <property type="match status" value="1"/>
</dbReference>
<dbReference type="PANTHER" id="PTHR43793:SF1">
    <property type="entry name" value="FAD SYNTHASE"/>
    <property type="match status" value="1"/>
</dbReference>
<dbReference type="Pfam" id="PF01467">
    <property type="entry name" value="CTP_transf_like"/>
    <property type="match status" value="1"/>
</dbReference>
<dbReference type="SUPFAM" id="SSF52374">
    <property type="entry name" value="Nucleotidylyl transferase"/>
    <property type="match status" value="1"/>
</dbReference>
<name>RIBL_HALMD</name>
<keyword id="KW-0067">ATP-binding</keyword>
<keyword id="KW-0274">FAD</keyword>
<keyword id="KW-0285">Flavoprotein</keyword>
<keyword id="KW-0288">FMN</keyword>
<keyword id="KW-0547">Nucleotide-binding</keyword>
<keyword id="KW-0548">Nucleotidyltransferase</keyword>
<keyword id="KW-1185">Reference proteome</keyword>
<keyword id="KW-0808">Transferase</keyword>
<organism>
    <name type="scientific">Halomicrobium mukohataei (strain ATCC 700874 / DSM 12286 / JCM 9738 / NCIMB 13541)</name>
    <name type="common">Haloarcula mukohataei</name>
    <dbReference type="NCBI Taxonomy" id="485914"/>
    <lineage>
        <taxon>Archaea</taxon>
        <taxon>Methanobacteriati</taxon>
        <taxon>Methanobacteriota</taxon>
        <taxon>Stenosarchaea group</taxon>
        <taxon>Halobacteria</taxon>
        <taxon>Halobacteriales</taxon>
        <taxon>Haloarculaceae</taxon>
        <taxon>Halomicrobium</taxon>
    </lineage>
</organism>
<feature type="chain" id="PRO_0000406239" description="FAD synthase">
    <location>
        <begin position="1"/>
        <end position="143"/>
    </location>
</feature>
<feature type="binding site" evidence="1">
    <location>
        <begin position="11"/>
        <end position="12"/>
    </location>
    <ligand>
        <name>ATP</name>
        <dbReference type="ChEBI" id="CHEBI:30616"/>
    </ligand>
</feature>
<feature type="binding site" evidence="1">
    <location>
        <begin position="16"/>
        <end position="19"/>
    </location>
    <ligand>
        <name>ATP</name>
        <dbReference type="ChEBI" id="CHEBI:30616"/>
    </ligand>
</feature>
<feature type="binding site" evidence="1">
    <location>
        <position position="94"/>
    </location>
    <ligand>
        <name>ATP</name>
        <dbReference type="ChEBI" id="CHEBI:30616"/>
    </ligand>
</feature>